<organism>
    <name type="scientific">Pseudoalteromonas translucida (strain TAC 125)</name>
    <dbReference type="NCBI Taxonomy" id="326442"/>
    <lineage>
        <taxon>Bacteria</taxon>
        <taxon>Pseudomonadati</taxon>
        <taxon>Pseudomonadota</taxon>
        <taxon>Gammaproteobacteria</taxon>
        <taxon>Alteromonadales</taxon>
        <taxon>Pseudoalteromonadaceae</taxon>
        <taxon>Pseudoalteromonas</taxon>
    </lineage>
</organism>
<name>PSRP_PSET1</name>
<proteinExistence type="inferred from homology"/>
<reference key="1">
    <citation type="journal article" date="2005" name="Genome Res.">
        <title>Coping with cold: the genome of the versatile marine Antarctica bacterium Pseudoalteromonas haloplanktis TAC125.</title>
        <authorList>
            <person name="Medigue C."/>
            <person name="Krin E."/>
            <person name="Pascal G."/>
            <person name="Barbe V."/>
            <person name="Bernsel A."/>
            <person name="Bertin P.N."/>
            <person name="Cheung F."/>
            <person name="Cruveiller S."/>
            <person name="D'Amico S."/>
            <person name="Duilio A."/>
            <person name="Fang G."/>
            <person name="Feller G."/>
            <person name="Ho C."/>
            <person name="Mangenot S."/>
            <person name="Marino G."/>
            <person name="Nilsson J."/>
            <person name="Parrilli E."/>
            <person name="Rocha E.P.C."/>
            <person name="Rouy Z."/>
            <person name="Sekowska A."/>
            <person name="Tutino M.L."/>
            <person name="Vallenet D."/>
            <person name="von Heijne G."/>
            <person name="Danchin A."/>
        </authorList>
    </citation>
    <scope>NUCLEOTIDE SEQUENCE [LARGE SCALE GENOMIC DNA]</scope>
    <source>
        <strain>TAC 125</strain>
    </source>
</reference>
<accession>Q3ICL0</accession>
<evidence type="ECO:0000255" key="1">
    <source>
        <dbReference type="HAMAP-Rule" id="MF_01062"/>
    </source>
</evidence>
<dbReference type="EC" id="2.7.11.33" evidence="1"/>
<dbReference type="EC" id="2.7.4.28" evidence="1"/>
<dbReference type="EMBL" id="CR954247">
    <property type="protein sequence ID" value="CAI89594.1"/>
    <property type="molecule type" value="Genomic_DNA"/>
</dbReference>
<dbReference type="SMR" id="Q3ICL0"/>
<dbReference type="STRING" id="326442.PSHAb0558"/>
<dbReference type="KEGG" id="pha:PSHAb0558"/>
<dbReference type="eggNOG" id="COG1806">
    <property type="taxonomic scope" value="Bacteria"/>
</dbReference>
<dbReference type="HOGENOM" id="CLU_046206_1_0_6"/>
<dbReference type="BioCyc" id="PHAL326442:PSHA_RS17525-MONOMER"/>
<dbReference type="Proteomes" id="UP000006843">
    <property type="component" value="Chromosome II"/>
</dbReference>
<dbReference type="GO" id="GO:0043531">
    <property type="term" value="F:ADP binding"/>
    <property type="evidence" value="ECO:0007669"/>
    <property type="project" value="UniProtKB-UniRule"/>
</dbReference>
<dbReference type="GO" id="GO:0005524">
    <property type="term" value="F:ATP binding"/>
    <property type="evidence" value="ECO:0007669"/>
    <property type="project" value="InterPro"/>
</dbReference>
<dbReference type="GO" id="GO:0016776">
    <property type="term" value="F:phosphotransferase activity, phosphate group as acceptor"/>
    <property type="evidence" value="ECO:0007669"/>
    <property type="project" value="UniProtKB-UniRule"/>
</dbReference>
<dbReference type="GO" id="GO:0004674">
    <property type="term" value="F:protein serine/threonine kinase activity"/>
    <property type="evidence" value="ECO:0007669"/>
    <property type="project" value="UniProtKB-UniRule"/>
</dbReference>
<dbReference type="HAMAP" id="MF_01062">
    <property type="entry name" value="PSRP"/>
    <property type="match status" value="1"/>
</dbReference>
<dbReference type="InterPro" id="IPR005177">
    <property type="entry name" value="Kinase-pyrophosphorylase"/>
</dbReference>
<dbReference type="InterPro" id="IPR026530">
    <property type="entry name" value="PSRP"/>
</dbReference>
<dbReference type="NCBIfam" id="NF003742">
    <property type="entry name" value="PRK05339.1"/>
    <property type="match status" value="1"/>
</dbReference>
<dbReference type="PANTHER" id="PTHR31756">
    <property type="entry name" value="PYRUVATE, PHOSPHATE DIKINASE REGULATORY PROTEIN 1, CHLOROPLASTIC"/>
    <property type="match status" value="1"/>
</dbReference>
<dbReference type="PANTHER" id="PTHR31756:SF3">
    <property type="entry name" value="PYRUVATE, PHOSPHATE DIKINASE REGULATORY PROTEIN 1, CHLOROPLASTIC"/>
    <property type="match status" value="1"/>
</dbReference>
<dbReference type="Pfam" id="PF03618">
    <property type="entry name" value="Kinase-PPPase"/>
    <property type="match status" value="1"/>
</dbReference>
<gene>
    <name type="ordered locus">PSHAb0558</name>
</gene>
<feature type="chain" id="PRO_0000196688" description="Putative phosphoenolpyruvate synthase regulatory protein">
    <location>
        <begin position="1"/>
        <end position="269"/>
    </location>
</feature>
<feature type="binding site" evidence="1">
    <location>
        <begin position="149"/>
        <end position="156"/>
    </location>
    <ligand>
        <name>ADP</name>
        <dbReference type="ChEBI" id="CHEBI:456216"/>
    </ligand>
</feature>
<protein>
    <recommendedName>
        <fullName evidence="1">Putative phosphoenolpyruvate synthase regulatory protein</fullName>
        <shortName evidence="1">PEP synthase regulatory protein</shortName>
        <shortName evidence="1">PSRP</shortName>
        <ecNumber evidence="1">2.7.11.33</ecNumber>
        <ecNumber evidence="1">2.7.4.28</ecNumber>
    </recommendedName>
    <alternativeName>
        <fullName evidence="1">Pyruvate, water dikinase regulatory protein</fullName>
    </alternativeName>
</protein>
<sequence length="269" mass="30758">MRTAFYISDGTAITSEVFGHATLSLFPVEFNHKTIPFVETEEKAHQIKELINATAKRDGEKPLIFFTFVNYNLTEIISSANAVCYDFLTTYSEKIEKELNVAPVPKIHRTHSIHEKSYDFRIDAVNYALMNDDGGNIKNYGEADIILIGVSRSGKTPTSLYLALQYGIKAANYPITEDDLETEGLPKCLIPFKHKLFGLTIDPERLAAIRDRRMANSKYASIRQCRIEVREVEMLYKRNRIPFLNSTHHSVEEISAKIISDTDLERRKY</sequence>
<comment type="function">
    <text evidence="1">Bifunctional serine/threonine kinase and phosphorylase involved in the regulation of the phosphoenolpyruvate synthase (PEPS) by catalyzing its phosphorylation/dephosphorylation.</text>
</comment>
<comment type="catalytic activity">
    <reaction evidence="1">
        <text>[pyruvate, water dikinase] + ADP = [pyruvate, water dikinase]-phosphate + AMP + H(+)</text>
        <dbReference type="Rhea" id="RHEA:46020"/>
        <dbReference type="Rhea" id="RHEA-COMP:11425"/>
        <dbReference type="Rhea" id="RHEA-COMP:11426"/>
        <dbReference type="ChEBI" id="CHEBI:15378"/>
        <dbReference type="ChEBI" id="CHEBI:43176"/>
        <dbReference type="ChEBI" id="CHEBI:68546"/>
        <dbReference type="ChEBI" id="CHEBI:456215"/>
        <dbReference type="ChEBI" id="CHEBI:456216"/>
        <dbReference type="EC" id="2.7.11.33"/>
    </reaction>
</comment>
<comment type="catalytic activity">
    <reaction evidence="1">
        <text>[pyruvate, water dikinase]-phosphate + phosphate + H(+) = [pyruvate, water dikinase] + diphosphate</text>
        <dbReference type="Rhea" id="RHEA:48580"/>
        <dbReference type="Rhea" id="RHEA-COMP:11425"/>
        <dbReference type="Rhea" id="RHEA-COMP:11426"/>
        <dbReference type="ChEBI" id="CHEBI:15378"/>
        <dbReference type="ChEBI" id="CHEBI:33019"/>
        <dbReference type="ChEBI" id="CHEBI:43176"/>
        <dbReference type="ChEBI" id="CHEBI:43474"/>
        <dbReference type="ChEBI" id="CHEBI:68546"/>
        <dbReference type="EC" id="2.7.4.28"/>
    </reaction>
</comment>
<comment type="similarity">
    <text evidence="1">Belongs to the pyruvate, phosphate/water dikinase regulatory protein family. PSRP subfamily.</text>
</comment>
<keyword id="KW-0418">Kinase</keyword>
<keyword id="KW-0547">Nucleotide-binding</keyword>
<keyword id="KW-1185">Reference proteome</keyword>
<keyword id="KW-0723">Serine/threonine-protein kinase</keyword>
<keyword id="KW-0808">Transferase</keyword>